<comment type="function">
    <text evidence="5">Catalyzes the removal of elemental sulfur atoms from cysteine to produce alanine. Seems to participate in the biosynthesis of the nitrogenase metalloclusters by providing the inorganic sulfur required for the Fe-S core formation.</text>
</comment>
<comment type="catalytic activity">
    <reaction evidence="5">
        <text>(sulfur carrier)-H + L-cysteine = (sulfur carrier)-SH + L-alanine</text>
        <dbReference type="Rhea" id="RHEA:43892"/>
        <dbReference type="Rhea" id="RHEA-COMP:14737"/>
        <dbReference type="Rhea" id="RHEA-COMP:14739"/>
        <dbReference type="ChEBI" id="CHEBI:29917"/>
        <dbReference type="ChEBI" id="CHEBI:35235"/>
        <dbReference type="ChEBI" id="CHEBI:57972"/>
        <dbReference type="ChEBI" id="CHEBI:64428"/>
        <dbReference type="EC" id="2.8.1.7"/>
    </reaction>
</comment>
<comment type="cofactor">
    <cofactor evidence="5">
        <name>pyridoxal 5'-phosphate</name>
        <dbReference type="ChEBI" id="CHEBI:597326"/>
    </cofactor>
</comment>
<comment type="activity regulation">
    <text evidence="5">Inhibited by equimolar concentrations of p-chloromercuribenzoic acid, iodoacetamide or N-ethylmaleimide.</text>
</comment>
<comment type="subunit">
    <text evidence="5">Homodimer.</text>
</comment>
<comment type="disruption phenotype">
    <text evidence="3">Fixes nitrogen very poorly; has very slow diazotrophic growth on nitrogen-free agar plates. A double nifS-nifV deletion no longer fixes nitrogen.</text>
</comment>
<comment type="similarity">
    <text evidence="8">Belongs to the class-V pyridoxal-phosphate-dependent aminotransferase family. NifS/IscS subfamily.</text>
</comment>
<proteinExistence type="evidence at protein level"/>
<gene>
    <name evidence="6" type="primary">nifS</name>
</gene>
<dbReference type="EC" id="2.8.1.7" evidence="5"/>
<dbReference type="EMBL" id="M17349">
    <property type="protein sequence ID" value="AAA22168.1"/>
    <property type="molecule type" value="Genomic_DNA"/>
</dbReference>
<dbReference type="EMBL" id="M20568">
    <property type="protein sequence ID" value="AAA64726.1"/>
    <property type="molecule type" value="Genomic_DNA"/>
</dbReference>
<dbReference type="PIR" id="S29757">
    <property type="entry name" value="S29757"/>
</dbReference>
<dbReference type="SMR" id="P05341"/>
<dbReference type="GO" id="GO:0031071">
    <property type="term" value="F:cysteine desulfurase activity"/>
    <property type="evidence" value="ECO:0000314"/>
    <property type="project" value="CACAO"/>
</dbReference>
<dbReference type="GO" id="GO:0051536">
    <property type="term" value="F:iron-sulfur cluster binding"/>
    <property type="evidence" value="ECO:0007669"/>
    <property type="project" value="UniProtKB-KW"/>
</dbReference>
<dbReference type="GO" id="GO:0046872">
    <property type="term" value="F:metal ion binding"/>
    <property type="evidence" value="ECO:0007669"/>
    <property type="project" value="UniProtKB-KW"/>
</dbReference>
<dbReference type="GO" id="GO:0030170">
    <property type="term" value="F:pyridoxal phosphate binding"/>
    <property type="evidence" value="ECO:0007669"/>
    <property type="project" value="InterPro"/>
</dbReference>
<dbReference type="GO" id="GO:0006520">
    <property type="term" value="P:amino acid metabolic process"/>
    <property type="evidence" value="ECO:0007669"/>
    <property type="project" value="InterPro"/>
</dbReference>
<dbReference type="GO" id="GO:0009399">
    <property type="term" value="P:nitrogen fixation"/>
    <property type="evidence" value="ECO:0007669"/>
    <property type="project" value="UniProtKB-KW"/>
</dbReference>
<dbReference type="FunFam" id="3.40.640.10:FF:000084">
    <property type="entry name" value="IscS-like cysteine desulfurase"/>
    <property type="match status" value="1"/>
</dbReference>
<dbReference type="Gene3D" id="1.10.260.50">
    <property type="match status" value="1"/>
</dbReference>
<dbReference type="Gene3D" id="3.90.1150.10">
    <property type="entry name" value="Aspartate Aminotransferase, domain 1"/>
    <property type="match status" value="1"/>
</dbReference>
<dbReference type="Gene3D" id="3.40.640.10">
    <property type="entry name" value="Type I PLP-dependent aspartate aminotransferase-like (Major domain)"/>
    <property type="match status" value="1"/>
</dbReference>
<dbReference type="InterPro" id="IPR000192">
    <property type="entry name" value="Aminotrans_V_dom"/>
</dbReference>
<dbReference type="InterPro" id="IPR020578">
    <property type="entry name" value="Aminotrans_V_PyrdxlP_BS"/>
</dbReference>
<dbReference type="InterPro" id="IPR017772">
    <property type="entry name" value="Cys_deSase_NifS_bac/arc"/>
</dbReference>
<dbReference type="InterPro" id="IPR016454">
    <property type="entry name" value="Cysteine_dSase"/>
</dbReference>
<dbReference type="InterPro" id="IPR015424">
    <property type="entry name" value="PyrdxlP-dep_Trfase"/>
</dbReference>
<dbReference type="InterPro" id="IPR015421">
    <property type="entry name" value="PyrdxlP-dep_Trfase_major"/>
</dbReference>
<dbReference type="InterPro" id="IPR015422">
    <property type="entry name" value="PyrdxlP-dep_Trfase_small"/>
</dbReference>
<dbReference type="NCBIfam" id="TIGR03402">
    <property type="entry name" value="FeS_nifS"/>
    <property type="match status" value="1"/>
</dbReference>
<dbReference type="PANTHER" id="PTHR11601:SF34">
    <property type="entry name" value="CYSTEINE DESULFURASE"/>
    <property type="match status" value="1"/>
</dbReference>
<dbReference type="PANTHER" id="PTHR11601">
    <property type="entry name" value="CYSTEINE DESULFURYLASE FAMILY MEMBER"/>
    <property type="match status" value="1"/>
</dbReference>
<dbReference type="Pfam" id="PF00266">
    <property type="entry name" value="Aminotran_5"/>
    <property type="match status" value="1"/>
</dbReference>
<dbReference type="PIRSF" id="PIRSF005572">
    <property type="entry name" value="NifS"/>
    <property type="match status" value="1"/>
</dbReference>
<dbReference type="SUPFAM" id="SSF53383">
    <property type="entry name" value="PLP-dependent transferases"/>
    <property type="match status" value="1"/>
</dbReference>
<dbReference type="PROSITE" id="PS00595">
    <property type="entry name" value="AA_TRANSFER_CLASS_5"/>
    <property type="match status" value="1"/>
</dbReference>
<organism>
    <name type="scientific">Azotobacter vinelandii</name>
    <dbReference type="NCBI Taxonomy" id="354"/>
    <lineage>
        <taxon>Bacteria</taxon>
        <taxon>Pseudomonadati</taxon>
        <taxon>Pseudomonadota</taxon>
        <taxon>Gammaproteobacteria</taxon>
        <taxon>Pseudomonadales</taxon>
        <taxon>Pseudomonadaceae</taxon>
        <taxon>Azotobacter</taxon>
    </lineage>
</organism>
<reference key="1">
    <citation type="journal article" date="1987" name="J. Bacteriol.">
        <title>Comparative organization of nitrogen fixation-specific genes from Azotobacter vinelandii and Klebsiella pneumoniae: DNA sequence of the nifUSV genes.</title>
        <authorList>
            <person name="Beynon J."/>
            <person name="Ally A."/>
            <person name="Cannon M."/>
            <person name="Cannon F."/>
            <person name="Jacobson M.R."/>
            <person name="Cash V.L."/>
            <person name="Dean D.R."/>
        </authorList>
    </citation>
    <scope>NUCLEOTIDE SEQUENCE [GENOMIC DNA]</scope>
</reference>
<reference key="2">
    <citation type="journal article" date="1989" name="J. Bacteriol.">
        <title>Physical and genetic map of the major nif gene cluster from Azotobacter vinelandii.</title>
        <authorList>
            <person name="Jacobson M.R."/>
            <person name="Brigle K.E."/>
            <person name="Bennett L.T."/>
            <person name="Setterquist R.A."/>
            <person name="Wilson M.S."/>
            <person name="Cash V.L."/>
            <person name="Beynon J."/>
            <person name="Newton W.E."/>
            <person name="Dean D.R."/>
        </authorList>
    </citation>
    <scope>NUCLEOTIDE SEQUENCE [GENOMIC DNA]</scope>
    <scope>DISRUPTION PHENOTYPE</scope>
    <source>
        <strain>ATCC 13705 / OP1 / DSM 366 / NCIMB 11614 / LMG 3878 / UW</strain>
    </source>
</reference>
<reference key="3">
    <citation type="journal article" date="1993" name="Proc. Natl. Acad. Sci. U.S.A.">
        <title>Cysteine desulfurase activity indicates a role for NIFS in metallocluster biosynthesis.</title>
        <authorList>
            <person name="Zheng L."/>
            <person name="White R.H."/>
            <person name="Cash V.L."/>
            <person name="Jack R.F."/>
            <person name="Dean D.R."/>
        </authorList>
    </citation>
    <scope>PROTEIN SEQUENCE OF 2-6</scope>
    <scope>FUNCTION</scope>
    <scope>CATALYTIC ACTIVITY</scope>
    <scope>COFACTOR</scope>
    <scope>ACTIVITY REGULATION</scope>
    <scope>SUBUNIT</scope>
</reference>
<reference key="4">
    <citation type="journal article" date="1994" name="Biochemistry">
        <title>Mechanism for the desulfurization of L-cysteine catalyzed by the nifS gene product.</title>
        <authorList>
            <person name="Zheng L."/>
            <person name="White R.H."/>
            <person name="Cash V.L."/>
            <person name="Dean D.R."/>
        </authorList>
    </citation>
    <scope>PROTEIN SEQUENCE OF 315-326</scope>
    <scope>MUTAGENESIS OF CYS-325</scope>
    <scope>ACTIVE SITE</scope>
</reference>
<sequence length="402" mass="43599">MADVYLDNNATTRVDDEIVQAMLPFFTEQFGNPSSLHSFGNQVGMALKKARQSVQKLLGAEHDSEILFTSCGTESDSTAILSALKAQPERKTVITTVVEHPAVLSLCDYLASEGYTVHKLPVDKKGRLDLEHYASLLTDDVAVVSVMWANNETGTLFPIEEMARLADDAGIMFHTDAVQAVGKVPIDLKNSSIHMLSLCGHKLHAPKGVGVLYLRRGTRFRPLLRGGHQERGRRAGTENAASIIGLGVAAERALQFMEHENTEVNALRDKLEAGILAVVPHAFVTGDPDNRLPNTANIAFEYIEGEAILLLLNKVGIAASSGSACTSGSLEPSHVMRAMDIPYTAAHGTVRFSLSRYTTEEEIDRVIREVPPIVAQLRNVSPYWSGNGPVEDPGKAFAPVYG</sequence>
<evidence type="ECO:0000250" key="1">
    <source>
        <dbReference type="UniProtKB" id="O29689"/>
    </source>
</evidence>
<evidence type="ECO:0000250" key="2">
    <source>
        <dbReference type="UniProtKB" id="P0A6B9"/>
    </source>
</evidence>
<evidence type="ECO:0000269" key="3">
    <source>
    </source>
</evidence>
<evidence type="ECO:0000269" key="4">
    <source>
    </source>
</evidence>
<evidence type="ECO:0000269" key="5">
    <source>
    </source>
</evidence>
<evidence type="ECO:0000303" key="6">
    <source>
    </source>
</evidence>
<evidence type="ECO:0000303" key="7">
    <source>
    </source>
</evidence>
<evidence type="ECO:0000305" key="8"/>
<protein>
    <recommendedName>
        <fullName evidence="7">Cysteine desulfurase NifS</fullName>
        <ecNumber evidence="5">2.8.1.7</ecNumber>
    </recommendedName>
    <alternativeName>
        <fullName evidence="7">Nitrogenase metalloclusters biosynthesis protein NifS</fullName>
    </alternativeName>
</protein>
<name>NIFS_AZOVI</name>
<keyword id="KW-0903">Direct protein sequencing</keyword>
<keyword id="KW-0408">Iron</keyword>
<keyword id="KW-0411">Iron-sulfur</keyword>
<keyword id="KW-0479">Metal-binding</keyword>
<keyword id="KW-0535">Nitrogen fixation</keyword>
<keyword id="KW-0663">Pyridoxal phosphate</keyword>
<keyword id="KW-0808">Transferase</keyword>
<accession>P05341</accession>
<feature type="initiator methionine" description="Removed" evidence="5">
    <location>
        <position position="1"/>
    </location>
</feature>
<feature type="chain" id="PRO_0000150252" description="Cysteine desulfurase NifS">
    <location>
        <begin position="2"/>
        <end position="402"/>
    </location>
</feature>
<feature type="active site" description="Cysteine persulfide intermediate" evidence="4">
    <location>
        <position position="325"/>
    </location>
</feature>
<feature type="binding site" evidence="2">
    <location>
        <begin position="72"/>
        <end position="73"/>
    </location>
    <ligand>
        <name>pyridoxal 5'-phosphate</name>
        <dbReference type="ChEBI" id="CHEBI:597326"/>
    </ligand>
</feature>
<feature type="binding site" evidence="1">
    <location>
        <position position="151"/>
    </location>
    <ligand>
        <name>pyridoxal 5'-phosphate</name>
        <dbReference type="ChEBI" id="CHEBI:597326"/>
    </ligand>
</feature>
<feature type="binding site" evidence="2">
    <location>
        <position position="179"/>
    </location>
    <ligand>
        <name>pyridoxal 5'-phosphate</name>
        <dbReference type="ChEBI" id="CHEBI:597326"/>
    </ligand>
</feature>
<feature type="binding site" evidence="2">
    <location>
        <begin position="199"/>
        <end position="201"/>
    </location>
    <ligand>
        <name>pyridoxal 5'-phosphate</name>
        <dbReference type="ChEBI" id="CHEBI:597326"/>
    </ligand>
</feature>
<feature type="binding site" evidence="2">
    <location>
        <position position="237"/>
    </location>
    <ligand>
        <name>pyridoxal 5'-phosphate</name>
        <dbReference type="ChEBI" id="CHEBI:597326"/>
    </ligand>
</feature>
<feature type="binding site" description="via persulfide group" evidence="1">
    <location>
        <position position="325"/>
    </location>
    <ligand>
        <name>[2Fe-2S] cluster</name>
        <dbReference type="ChEBI" id="CHEBI:190135"/>
        <note>ligand shared with IscU</note>
    </ligand>
</feature>
<feature type="modified residue" description="N6-(pyridoxal phosphate)lysine" evidence="8">
    <location>
        <position position="202"/>
    </location>
</feature>
<feature type="mutagenesis site" description="Loss of cysteine desulfurization; loss of reactivity toward alkylation." evidence="4">
    <original>C</original>
    <variation>A</variation>
    <location>
        <position position="325"/>
    </location>
</feature>
<feature type="sequence conflict" description="In Ref. 1; AAA22168." evidence="8" ref="1">
    <original>F</original>
    <variation>L</variation>
    <location>
        <position position="39"/>
    </location>
</feature>